<sequence length="367" mass="38320">MTASRRTLMVMAGGTGGHVFPGLAVAHRMEAAGWRVVWLGNPAGMEATLVPKHGIPMEYVRFGGLRGKGLKTKLALPFNLLRACAQSLAALRRVRPDVVLGMGGYITFPAGVMTALSGRPLVLHEQNSIAGLANKVLAKLAKRVLVAFPGALPHAEWTGNPIRAELARTEPPKARYAARSGPLNVLVVGGSLGAAALNEVVPRALALLAPGERPRVVHQAGAKHIDALKANYEAAGFAAGDDVRLVPFIDDMAAAYAAADLVICRSGAMTVSEIAAVGVAALFVPFPYAVDDHQTTNAAFLADAGAAVLVQQRDLSAELLADWLRGQSRASLAAMAERSRSLAKPEATDEVARVCATVAGANLESLQ</sequence>
<keyword id="KW-0131">Cell cycle</keyword>
<keyword id="KW-0132">Cell division</keyword>
<keyword id="KW-0997">Cell inner membrane</keyword>
<keyword id="KW-1003">Cell membrane</keyword>
<keyword id="KW-0133">Cell shape</keyword>
<keyword id="KW-0961">Cell wall biogenesis/degradation</keyword>
<keyword id="KW-0328">Glycosyltransferase</keyword>
<keyword id="KW-0472">Membrane</keyword>
<keyword id="KW-0573">Peptidoglycan synthesis</keyword>
<keyword id="KW-1185">Reference proteome</keyword>
<keyword id="KW-0808">Transferase</keyword>
<proteinExistence type="inferred from homology"/>
<reference key="1">
    <citation type="submission" date="2007-10" db="EMBL/GenBank/DDBJ databases">
        <title>Complete sequence of chromosome 1 of Burkholderia multivorans ATCC 17616.</title>
        <authorList>
            <person name="Copeland A."/>
            <person name="Lucas S."/>
            <person name="Lapidus A."/>
            <person name="Barry K."/>
            <person name="Glavina del Rio T."/>
            <person name="Dalin E."/>
            <person name="Tice H."/>
            <person name="Pitluck S."/>
            <person name="Chain P."/>
            <person name="Malfatti S."/>
            <person name="Shin M."/>
            <person name="Vergez L."/>
            <person name="Schmutz J."/>
            <person name="Larimer F."/>
            <person name="Land M."/>
            <person name="Hauser L."/>
            <person name="Kyrpides N."/>
            <person name="Kim E."/>
            <person name="Tiedje J."/>
            <person name="Richardson P."/>
        </authorList>
    </citation>
    <scope>NUCLEOTIDE SEQUENCE [LARGE SCALE GENOMIC DNA]</scope>
    <source>
        <strain>ATCC 17616 / 249</strain>
    </source>
</reference>
<reference key="2">
    <citation type="submission" date="2007-04" db="EMBL/GenBank/DDBJ databases">
        <title>Complete genome sequence of Burkholderia multivorans ATCC 17616.</title>
        <authorList>
            <person name="Ohtsubo Y."/>
            <person name="Yamashita A."/>
            <person name="Kurokawa K."/>
            <person name="Takami H."/>
            <person name="Yuhara S."/>
            <person name="Nishiyama E."/>
            <person name="Endo R."/>
            <person name="Miyazaki R."/>
            <person name="Ono A."/>
            <person name="Yano K."/>
            <person name="Ito M."/>
            <person name="Sota M."/>
            <person name="Yuji N."/>
            <person name="Hattori M."/>
            <person name="Tsuda M."/>
        </authorList>
    </citation>
    <scope>NUCLEOTIDE SEQUENCE [LARGE SCALE GENOMIC DNA]</scope>
    <source>
        <strain>ATCC 17616 / 249</strain>
    </source>
</reference>
<evidence type="ECO:0000255" key="1">
    <source>
        <dbReference type="HAMAP-Rule" id="MF_00033"/>
    </source>
</evidence>
<name>MURG_BURM1</name>
<feature type="chain" id="PRO_1000090412" description="UDP-N-acetylglucosamine--N-acetylmuramyl-(pentapeptide) pyrophosphoryl-undecaprenol N-acetylglucosamine transferase">
    <location>
        <begin position="1"/>
        <end position="367"/>
    </location>
</feature>
<feature type="binding site" evidence="1">
    <location>
        <begin position="15"/>
        <end position="17"/>
    </location>
    <ligand>
        <name>UDP-N-acetyl-alpha-D-glucosamine</name>
        <dbReference type="ChEBI" id="CHEBI:57705"/>
    </ligand>
</feature>
<feature type="binding site" evidence="1">
    <location>
        <position position="127"/>
    </location>
    <ligand>
        <name>UDP-N-acetyl-alpha-D-glucosamine</name>
        <dbReference type="ChEBI" id="CHEBI:57705"/>
    </ligand>
</feature>
<feature type="binding site" evidence="1">
    <location>
        <position position="163"/>
    </location>
    <ligand>
        <name>UDP-N-acetyl-alpha-D-glucosamine</name>
        <dbReference type="ChEBI" id="CHEBI:57705"/>
    </ligand>
</feature>
<feature type="binding site" evidence="1">
    <location>
        <position position="191"/>
    </location>
    <ligand>
        <name>UDP-N-acetyl-alpha-D-glucosamine</name>
        <dbReference type="ChEBI" id="CHEBI:57705"/>
    </ligand>
</feature>
<feature type="binding site" evidence="1">
    <location>
        <position position="249"/>
    </location>
    <ligand>
        <name>UDP-N-acetyl-alpha-D-glucosamine</name>
        <dbReference type="ChEBI" id="CHEBI:57705"/>
    </ligand>
</feature>
<feature type="binding site" evidence="1">
    <location>
        <position position="294"/>
    </location>
    <ligand>
        <name>UDP-N-acetyl-alpha-D-glucosamine</name>
        <dbReference type="ChEBI" id="CHEBI:57705"/>
    </ligand>
</feature>
<comment type="function">
    <text evidence="1">Cell wall formation. Catalyzes the transfer of a GlcNAc subunit on undecaprenyl-pyrophosphoryl-MurNAc-pentapeptide (lipid intermediate I) to form undecaprenyl-pyrophosphoryl-MurNAc-(pentapeptide)GlcNAc (lipid intermediate II).</text>
</comment>
<comment type="catalytic activity">
    <reaction evidence="1">
        <text>di-trans,octa-cis-undecaprenyl diphospho-N-acetyl-alpha-D-muramoyl-L-alanyl-D-glutamyl-meso-2,6-diaminopimeloyl-D-alanyl-D-alanine + UDP-N-acetyl-alpha-D-glucosamine = di-trans,octa-cis-undecaprenyl diphospho-[N-acetyl-alpha-D-glucosaminyl-(1-&gt;4)]-N-acetyl-alpha-D-muramoyl-L-alanyl-D-glutamyl-meso-2,6-diaminopimeloyl-D-alanyl-D-alanine + UDP + H(+)</text>
        <dbReference type="Rhea" id="RHEA:31227"/>
        <dbReference type="ChEBI" id="CHEBI:15378"/>
        <dbReference type="ChEBI" id="CHEBI:57705"/>
        <dbReference type="ChEBI" id="CHEBI:58223"/>
        <dbReference type="ChEBI" id="CHEBI:61387"/>
        <dbReference type="ChEBI" id="CHEBI:61388"/>
        <dbReference type="EC" id="2.4.1.227"/>
    </reaction>
</comment>
<comment type="pathway">
    <text evidence="1">Cell wall biogenesis; peptidoglycan biosynthesis.</text>
</comment>
<comment type="subcellular location">
    <subcellularLocation>
        <location evidence="1">Cell inner membrane</location>
        <topology evidence="1">Peripheral membrane protein</topology>
        <orientation evidence="1">Cytoplasmic side</orientation>
    </subcellularLocation>
</comment>
<comment type="similarity">
    <text evidence="1">Belongs to the glycosyltransferase 28 family. MurG subfamily.</text>
</comment>
<accession>A9AI96</accession>
<dbReference type="EC" id="2.4.1.227" evidence="1"/>
<dbReference type="EMBL" id="CP000868">
    <property type="protein sequence ID" value="ABX16520.1"/>
    <property type="molecule type" value="Genomic_DNA"/>
</dbReference>
<dbReference type="EMBL" id="AP009385">
    <property type="protein sequence ID" value="BAG42370.1"/>
    <property type="molecule type" value="Genomic_DNA"/>
</dbReference>
<dbReference type="RefSeq" id="WP_012214186.1">
    <property type="nucleotide sequence ID" value="NC_010084.1"/>
</dbReference>
<dbReference type="SMR" id="A9AI96"/>
<dbReference type="STRING" id="395019.BMULJ_00402"/>
<dbReference type="CAZy" id="GT28">
    <property type="family name" value="Glycosyltransferase Family 28"/>
</dbReference>
<dbReference type="KEGG" id="bmj:BMULJ_00402"/>
<dbReference type="KEGG" id="bmu:Bmul_2836"/>
<dbReference type="eggNOG" id="COG0707">
    <property type="taxonomic scope" value="Bacteria"/>
</dbReference>
<dbReference type="HOGENOM" id="CLU_037404_2_0_4"/>
<dbReference type="UniPathway" id="UPA00219"/>
<dbReference type="Proteomes" id="UP000008815">
    <property type="component" value="Chromosome 1"/>
</dbReference>
<dbReference type="GO" id="GO:0005886">
    <property type="term" value="C:plasma membrane"/>
    <property type="evidence" value="ECO:0007669"/>
    <property type="project" value="UniProtKB-SubCell"/>
</dbReference>
<dbReference type="GO" id="GO:0051991">
    <property type="term" value="F:UDP-N-acetyl-D-glucosamine:N-acetylmuramoyl-L-alanyl-D-glutamyl-meso-2,6-diaminopimelyl-D-alanyl-D-alanine-diphosphoundecaprenol 4-beta-N-acetylglucosaminlytransferase activity"/>
    <property type="evidence" value="ECO:0007669"/>
    <property type="project" value="RHEA"/>
</dbReference>
<dbReference type="GO" id="GO:0050511">
    <property type="term" value="F:undecaprenyldiphospho-muramoylpentapeptide beta-N-acetylglucosaminyltransferase activity"/>
    <property type="evidence" value="ECO:0007669"/>
    <property type="project" value="UniProtKB-UniRule"/>
</dbReference>
<dbReference type="GO" id="GO:0005975">
    <property type="term" value="P:carbohydrate metabolic process"/>
    <property type="evidence" value="ECO:0007669"/>
    <property type="project" value="InterPro"/>
</dbReference>
<dbReference type="GO" id="GO:0051301">
    <property type="term" value="P:cell division"/>
    <property type="evidence" value="ECO:0007669"/>
    <property type="project" value="UniProtKB-KW"/>
</dbReference>
<dbReference type="GO" id="GO:0071555">
    <property type="term" value="P:cell wall organization"/>
    <property type="evidence" value="ECO:0007669"/>
    <property type="project" value="UniProtKB-KW"/>
</dbReference>
<dbReference type="GO" id="GO:0030259">
    <property type="term" value="P:lipid glycosylation"/>
    <property type="evidence" value="ECO:0007669"/>
    <property type="project" value="UniProtKB-UniRule"/>
</dbReference>
<dbReference type="GO" id="GO:0009252">
    <property type="term" value="P:peptidoglycan biosynthetic process"/>
    <property type="evidence" value="ECO:0007669"/>
    <property type="project" value="UniProtKB-UniRule"/>
</dbReference>
<dbReference type="GO" id="GO:0008360">
    <property type="term" value="P:regulation of cell shape"/>
    <property type="evidence" value="ECO:0007669"/>
    <property type="project" value="UniProtKB-KW"/>
</dbReference>
<dbReference type="CDD" id="cd03785">
    <property type="entry name" value="GT28_MurG"/>
    <property type="match status" value="1"/>
</dbReference>
<dbReference type="Gene3D" id="3.40.50.2000">
    <property type="entry name" value="Glycogen Phosphorylase B"/>
    <property type="match status" value="2"/>
</dbReference>
<dbReference type="HAMAP" id="MF_00033">
    <property type="entry name" value="MurG"/>
    <property type="match status" value="1"/>
</dbReference>
<dbReference type="InterPro" id="IPR006009">
    <property type="entry name" value="GlcNAc_MurG"/>
</dbReference>
<dbReference type="InterPro" id="IPR007235">
    <property type="entry name" value="Glyco_trans_28_C"/>
</dbReference>
<dbReference type="InterPro" id="IPR004276">
    <property type="entry name" value="GlycoTrans_28_N"/>
</dbReference>
<dbReference type="NCBIfam" id="TIGR01133">
    <property type="entry name" value="murG"/>
    <property type="match status" value="1"/>
</dbReference>
<dbReference type="PANTHER" id="PTHR21015:SF22">
    <property type="entry name" value="GLYCOSYLTRANSFERASE"/>
    <property type="match status" value="1"/>
</dbReference>
<dbReference type="PANTHER" id="PTHR21015">
    <property type="entry name" value="UDP-N-ACETYLGLUCOSAMINE--N-ACETYLMURAMYL-(PENTAPEPTIDE) PYROPHOSPHORYL-UNDECAPRENOL N-ACETYLGLUCOSAMINE TRANSFERASE 1"/>
    <property type="match status" value="1"/>
</dbReference>
<dbReference type="Pfam" id="PF04101">
    <property type="entry name" value="Glyco_tran_28_C"/>
    <property type="match status" value="1"/>
</dbReference>
<dbReference type="Pfam" id="PF03033">
    <property type="entry name" value="Glyco_transf_28"/>
    <property type="match status" value="1"/>
</dbReference>
<dbReference type="SUPFAM" id="SSF53756">
    <property type="entry name" value="UDP-Glycosyltransferase/glycogen phosphorylase"/>
    <property type="match status" value="1"/>
</dbReference>
<organism>
    <name type="scientific">Burkholderia multivorans (strain ATCC 17616 / 249)</name>
    <dbReference type="NCBI Taxonomy" id="395019"/>
    <lineage>
        <taxon>Bacteria</taxon>
        <taxon>Pseudomonadati</taxon>
        <taxon>Pseudomonadota</taxon>
        <taxon>Betaproteobacteria</taxon>
        <taxon>Burkholderiales</taxon>
        <taxon>Burkholderiaceae</taxon>
        <taxon>Burkholderia</taxon>
        <taxon>Burkholderia cepacia complex</taxon>
    </lineage>
</organism>
<gene>
    <name evidence="1" type="primary">murG</name>
    <name type="ordered locus">Bmul_2836</name>
    <name type="ordered locus">BMULJ_00402</name>
</gene>
<protein>
    <recommendedName>
        <fullName evidence="1">UDP-N-acetylglucosamine--N-acetylmuramyl-(pentapeptide) pyrophosphoryl-undecaprenol N-acetylglucosamine transferase</fullName>
        <ecNumber evidence="1">2.4.1.227</ecNumber>
    </recommendedName>
    <alternativeName>
        <fullName evidence="1">Undecaprenyl-PP-MurNAc-pentapeptide-UDPGlcNAc GlcNAc transferase</fullName>
    </alternativeName>
</protein>